<protein>
    <recommendedName>
        <fullName evidence="1">(5-formylfuran-3-yl)methyl phosphate synthase</fullName>
        <ecNumber evidence="1">4.2.3.153</ecNumber>
    </recommendedName>
    <alternativeName>
        <fullName evidence="1">4-(hydroxymethyl)-2-furancarboxaldehyde-phosphate synthase</fullName>
        <shortName evidence="1">4-HFC-P synthase</shortName>
    </alternativeName>
</protein>
<accession>A5UNQ5</accession>
<feature type="chain" id="PRO_1000044923" description="(5-formylfuran-3-yl)methyl phosphate synthase">
    <location>
        <begin position="1"/>
        <end position="237"/>
    </location>
</feature>
<feature type="active site" description="Schiff-base intermediate with substrate" evidence="1">
    <location>
        <position position="27"/>
    </location>
</feature>
<feature type="active site" description="Proton acceptor" evidence="1">
    <location>
        <position position="85"/>
    </location>
</feature>
<organism>
    <name type="scientific">Methanobrevibacter smithii (strain ATCC 35061 / DSM 861 / OCM 144 / PS)</name>
    <dbReference type="NCBI Taxonomy" id="420247"/>
    <lineage>
        <taxon>Archaea</taxon>
        <taxon>Methanobacteriati</taxon>
        <taxon>Methanobacteriota</taxon>
        <taxon>Methanomada group</taxon>
        <taxon>Methanobacteria</taxon>
        <taxon>Methanobacteriales</taxon>
        <taxon>Methanobacteriaceae</taxon>
        <taxon>Methanobrevibacter</taxon>
    </lineage>
</organism>
<dbReference type="EC" id="4.2.3.153" evidence="1"/>
<dbReference type="EMBL" id="CP000678">
    <property type="protein sequence ID" value="ABQ87833.1"/>
    <property type="molecule type" value="Genomic_DNA"/>
</dbReference>
<dbReference type="RefSeq" id="WP_011954643.1">
    <property type="nucleotide sequence ID" value="NZ_CP117965.1"/>
</dbReference>
<dbReference type="SMR" id="A5UNQ5"/>
<dbReference type="STRING" id="420247.Msm_1628"/>
<dbReference type="EnsemblBacteria" id="ABQ87833">
    <property type="protein sequence ID" value="ABQ87833"/>
    <property type="gene ID" value="Msm_1628"/>
</dbReference>
<dbReference type="KEGG" id="msi:Msm_1628"/>
<dbReference type="PATRIC" id="fig|420247.28.peg.1618"/>
<dbReference type="eggNOG" id="arCOG04482">
    <property type="taxonomic scope" value="Archaea"/>
</dbReference>
<dbReference type="HOGENOM" id="CLU_068659_0_0_2"/>
<dbReference type="BioCyc" id="MSMI420247:GHWZ-1669-MONOMER"/>
<dbReference type="UniPathway" id="UPA00080"/>
<dbReference type="Proteomes" id="UP000001992">
    <property type="component" value="Chromosome"/>
</dbReference>
<dbReference type="GO" id="GO:0016830">
    <property type="term" value="F:carbon-carbon lyase activity"/>
    <property type="evidence" value="ECO:0007669"/>
    <property type="project" value="UniProtKB-UniRule"/>
</dbReference>
<dbReference type="GO" id="GO:2001120">
    <property type="term" value="P:methanofuran biosynthetic process"/>
    <property type="evidence" value="ECO:0007669"/>
    <property type="project" value="UniProtKB-UniRule"/>
</dbReference>
<dbReference type="HAMAP" id="MF_00681">
    <property type="entry name" value="MfnB"/>
    <property type="match status" value="1"/>
</dbReference>
<dbReference type="InterPro" id="IPR007565">
    <property type="entry name" value="4HFCP_synth"/>
</dbReference>
<dbReference type="InterPro" id="IPR035081">
    <property type="entry name" value="4HFCP_synth_arc"/>
</dbReference>
<dbReference type="InterPro" id="IPR011060">
    <property type="entry name" value="RibuloseP-bd_barrel"/>
</dbReference>
<dbReference type="NCBIfam" id="NF002573">
    <property type="entry name" value="PRK02227.1-1"/>
    <property type="match status" value="1"/>
</dbReference>
<dbReference type="NCBIfam" id="NF002575">
    <property type="entry name" value="PRK02227.1-3"/>
    <property type="match status" value="1"/>
</dbReference>
<dbReference type="Pfam" id="PF04476">
    <property type="entry name" value="4HFCP_synth"/>
    <property type="match status" value="1"/>
</dbReference>
<dbReference type="PIRSF" id="PIRSF015957">
    <property type="entry name" value="UCP015957"/>
    <property type="match status" value="1"/>
</dbReference>
<dbReference type="SUPFAM" id="SSF51569">
    <property type="entry name" value="Aldolase"/>
    <property type="match status" value="1"/>
</dbReference>
<dbReference type="SUPFAM" id="SSF51366">
    <property type="entry name" value="Ribulose-phoshate binding barrel"/>
    <property type="match status" value="1"/>
</dbReference>
<gene>
    <name evidence="1" type="primary">mfnB</name>
    <name type="ordered locus">Msm_1628</name>
</gene>
<name>MFNB_METS3</name>
<comment type="function">
    <text evidence="1">Catalyzes the formation of 4-(hydroxymethyl)-2-furancarboxaldehyde phosphate (4-HFC-P) from two molecules of glyceraldehyde-3-P (GA-3-P).</text>
</comment>
<comment type="catalytic activity">
    <reaction evidence="1">
        <text>2 D-glyceraldehyde 3-phosphate = 4-(hydroxymethyl)-2-furancarboxaldehyde phosphate + phosphate + 2 H2O</text>
        <dbReference type="Rhea" id="RHEA:43536"/>
        <dbReference type="ChEBI" id="CHEBI:15377"/>
        <dbReference type="ChEBI" id="CHEBI:43474"/>
        <dbReference type="ChEBI" id="CHEBI:59776"/>
        <dbReference type="ChEBI" id="CHEBI:83407"/>
        <dbReference type="EC" id="4.2.3.153"/>
    </reaction>
</comment>
<comment type="pathway">
    <text evidence="1">Cofactor biosynthesis; methanofuran biosynthesis.</text>
</comment>
<comment type="similarity">
    <text evidence="1">Belongs to the MfnB family.</text>
</comment>
<reference key="1">
    <citation type="journal article" date="2007" name="Proc. Natl. Acad. Sci. U.S.A.">
        <title>Genomic and metabolic adaptations of Methanobrevibacter smithii to the human gut.</title>
        <authorList>
            <person name="Samuel B.S."/>
            <person name="Hansen E.E."/>
            <person name="Manchester J.K."/>
            <person name="Coutinho P.M."/>
            <person name="Henrissat B."/>
            <person name="Fulton R."/>
            <person name="Latreille P."/>
            <person name="Kim K."/>
            <person name="Wilson R.K."/>
            <person name="Gordon J.I."/>
        </authorList>
    </citation>
    <scope>NUCLEOTIDE SEQUENCE [LARGE SCALE GENOMIC DNA]</scope>
    <source>
        <strain>ATCC 35061 / DSM 861 / OCM 144 / PS</strain>
    </source>
</reference>
<proteinExistence type="inferred from homology"/>
<sequence length="237" mass="25250">MLLLISPINHEEALESIKGGADIVDVKNPKEGSLGANFPWVIRDIREITPEDKLVSATLGDVPYKPGTVSLAAMGAHVSGADYIKVGLYGTKDYDEAVEVMENVAKTIKDVDNDTIVVASGYADAHRVGAVDPMEIPKVAKDAGCDLAMLDTAVKDGHTLFDYLSIEDLEKFVNEAHSYGLKTALAGSVKKEQLKPLNDIGCDVVGIRGAACVGGDRNTGKIHHTAVAELKELCDSF</sequence>
<evidence type="ECO:0000255" key="1">
    <source>
        <dbReference type="HAMAP-Rule" id="MF_00681"/>
    </source>
</evidence>
<keyword id="KW-0456">Lyase</keyword>
<keyword id="KW-0704">Schiff base</keyword>